<sequence>MFDIGFWELVLIFVVGLVVLGPERLPHAIRSVARFVSAAKSMANSVKDELAHELKVQELQENLRKAEQMGMEELSPDLKASVEQLKQAAQSVNRPYADVSAKNEATSSSSSDATHQTEATKTSAANTKSE</sequence>
<reference key="1">
    <citation type="submission" date="2002-12" db="EMBL/GenBank/DDBJ databases">
        <title>Complete genome sequence of Vibrio vulnificus CMCP6.</title>
        <authorList>
            <person name="Rhee J.H."/>
            <person name="Kim S.Y."/>
            <person name="Chung S.S."/>
            <person name="Kim J.J."/>
            <person name="Moon Y.H."/>
            <person name="Jeong H."/>
            <person name="Choy H.E."/>
        </authorList>
    </citation>
    <scope>NUCLEOTIDE SEQUENCE [LARGE SCALE GENOMIC DNA]</scope>
    <source>
        <strain>CMCP6</strain>
    </source>
</reference>
<proteinExistence type="inferred from homology"/>
<evidence type="ECO:0000255" key="1">
    <source>
        <dbReference type="HAMAP-Rule" id="MF_00237"/>
    </source>
</evidence>
<evidence type="ECO:0000256" key="2">
    <source>
        <dbReference type="SAM" id="MobiDB-lite"/>
    </source>
</evidence>
<keyword id="KW-0997">Cell inner membrane</keyword>
<keyword id="KW-1003">Cell membrane</keyword>
<keyword id="KW-0472">Membrane</keyword>
<keyword id="KW-0653">Protein transport</keyword>
<keyword id="KW-0811">Translocation</keyword>
<keyword id="KW-0812">Transmembrane</keyword>
<keyword id="KW-1133">Transmembrane helix</keyword>
<keyword id="KW-0813">Transport</keyword>
<organism>
    <name type="scientific">Vibrio vulnificus (strain CMCP6)</name>
    <dbReference type="NCBI Taxonomy" id="216895"/>
    <lineage>
        <taxon>Bacteria</taxon>
        <taxon>Pseudomonadati</taxon>
        <taxon>Pseudomonadota</taxon>
        <taxon>Gammaproteobacteria</taxon>
        <taxon>Vibrionales</taxon>
        <taxon>Vibrionaceae</taxon>
        <taxon>Vibrio</taxon>
    </lineage>
</organism>
<dbReference type="EMBL" id="AE016795">
    <property type="protein sequence ID" value="AAO09407.1"/>
    <property type="molecule type" value="Genomic_DNA"/>
</dbReference>
<dbReference type="RefSeq" id="WP_011078971.1">
    <property type="nucleotide sequence ID" value="NC_004459.3"/>
</dbReference>
<dbReference type="SMR" id="Q8DDQ3"/>
<dbReference type="KEGG" id="vvu:VV1_0905"/>
<dbReference type="HOGENOM" id="CLU_086034_1_1_6"/>
<dbReference type="Proteomes" id="UP000002275">
    <property type="component" value="Chromosome 1"/>
</dbReference>
<dbReference type="GO" id="GO:0033281">
    <property type="term" value="C:TAT protein transport complex"/>
    <property type="evidence" value="ECO:0007669"/>
    <property type="project" value="UniProtKB-UniRule"/>
</dbReference>
<dbReference type="GO" id="GO:0008320">
    <property type="term" value="F:protein transmembrane transporter activity"/>
    <property type="evidence" value="ECO:0007669"/>
    <property type="project" value="UniProtKB-UniRule"/>
</dbReference>
<dbReference type="GO" id="GO:0043953">
    <property type="term" value="P:protein transport by the Tat complex"/>
    <property type="evidence" value="ECO:0007669"/>
    <property type="project" value="UniProtKB-UniRule"/>
</dbReference>
<dbReference type="Gene3D" id="1.20.5.3310">
    <property type="match status" value="1"/>
</dbReference>
<dbReference type="HAMAP" id="MF_00237">
    <property type="entry name" value="TatB"/>
    <property type="match status" value="1"/>
</dbReference>
<dbReference type="InterPro" id="IPR003369">
    <property type="entry name" value="TatA/B/E"/>
</dbReference>
<dbReference type="InterPro" id="IPR018448">
    <property type="entry name" value="TatB"/>
</dbReference>
<dbReference type="NCBIfam" id="TIGR01410">
    <property type="entry name" value="tatB"/>
    <property type="match status" value="1"/>
</dbReference>
<dbReference type="PANTHER" id="PTHR33162">
    <property type="entry name" value="SEC-INDEPENDENT PROTEIN TRANSLOCASE PROTEIN TATA, CHLOROPLASTIC"/>
    <property type="match status" value="1"/>
</dbReference>
<dbReference type="PANTHER" id="PTHR33162:SF1">
    <property type="entry name" value="SEC-INDEPENDENT PROTEIN TRANSLOCASE PROTEIN TATA, CHLOROPLASTIC"/>
    <property type="match status" value="1"/>
</dbReference>
<dbReference type="Pfam" id="PF02416">
    <property type="entry name" value="TatA_B_E"/>
    <property type="match status" value="1"/>
</dbReference>
<dbReference type="PRINTS" id="PR01506">
    <property type="entry name" value="TATBPROTEIN"/>
</dbReference>
<name>TATB_VIBVU</name>
<comment type="function">
    <text evidence="1">Part of the twin-arginine translocation (Tat) system that transports large folded proteins containing a characteristic twin-arginine motif in their signal peptide across membranes. Together with TatC, TatB is part of a receptor directly interacting with Tat signal peptides. TatB may form an oligomeric binding site that transiently accommodates folded Tat precursor proteins before their translocation.</text>
</comment>
<comment type="subunit">
    <text evidence="1">The Tat system comprises two distinct complexes: a TatABC complex, containing multiple copies of TatA, TatB and TatC subunits, and a separate TatA complex, containing only TatA subunits. Substrates initially bind to the TatABC complex, which probably triggers association of the separate TatA complex to form the active translocon.</text>
</comment>
<comment type="subcellular location">
    <subcellularLocation>
        <location evidence="1">Cell inner membrane</location>
        <topology evidence="1">Single-pass membrane protein</topology>
    </subcellularLocation>
</comment>
<comment type="similarity">
    <text evidence="1">Belongs to the TatB family.</text>
</comment>
<feature type="chain" id="PRO_0000192675" description="Sec-independent protein translocase protein TatB">
    <location>
        <begin position="1"/>
        <end position="130"/>
    </location>
</feature>
<feature type="transmembrane region" description="Helical" evidence="1">
    <location>
        <begin position="1"/>
        <end position="21"/>
    </location>
</feature>
<feature type="region of interest" description="Disordered" evidence="2">
    <location>
        <begin position="85"/>
        <end position="130"/>
    </location>
</feature>
<feature type="compositionally biased region" description="Polar residues" evidence="2">
    <location>
        <begin position="112"/>
        <end position="130"/>
    </location>
</feature>
<protein>
    <recommendedName>
        <fullName evidence="1">Sec-independent protein translocase protein TatB</fullName>
    </recommendedName>
</protein>
<gene>
    <name evidence="1" type="primary">tatB</name>
    <name type="ordered locus">VV1_0905</name>
</gene>
<accession>Q8DDQ3</accession>